<reference key="1">
    <citation type="journal article" date="1996" name="Nucleic Acids Res.">
        <title>Complete sequence analysis of the genome of the bacterium Mycoplasma pneumoniae.</title>
        <authorList>
            <person name="Himmelreich R."/>
            <person name="Hilbert H."/>
            <person name="Plagens H."/>
            <person name="Pirkl E."/>
            <person name="Li B.-C."/>
            <person name="Herrmann R."/>
        </authorList>
    </citation>
    <scope>NUCLEOTIDE SEQUENCE [LARGE SCALE GENOMIC DNA]</scope>
    <source>
        <strain>ATCC 29342 / M129 / Subtype 1</strain>
    </source>
</reference>
<sequence>MKIIYQEQPNECGICVLGMLANELHEDKYAHDELLEQINLPASGLSFFELETYGKKFGLEIASYQLTLEELKQLEGKYFIVHFPKHFVVVHKKQDNLWEVFDPAKGKYLLNDEELKKQWTGYAATVQKSFKEIPPINKRNFFKHFFDLNLIIFYVFIELIIIGISTLLATASKTMIANTVDFGTSVNIVVFVVFFLVLKGLYLLLYALLQMVRNVLFWKQYRGYLGWIMQTLQTKSFVYFSNKSPNQLTERQFYLKEVLSFFNVHIPNLIISCTVALIIGTLIGINQMEFLWIAIVQIVVNCAIFLYDFFFTKRITKQAIPQMELQNKVSLQLDGNLRDEQNGKRFNYLMMQLRKALIKNQNISNQKEVNHLASDGVKSFAQQVFDFLILALGIIGIIEQRYTLAFLFYIFSIQALFSAYATRIIQFGAAVNLYQFCKDKLVTLFEDKVNDCNFKVSWKCPKVINLNNCSITLNQNLDLANLNLNLTNGMVISGENGSGKSTLLKILTGRGLSYQGQIKLDELDLKDFSASQLFHNVYYLTGQLTAYNDITDFGYSEALLNCKNPQVYQLLADTGIHNQIKLSSGQKQILQLFLLQNLKDKVILLDETLNAIATELKPRVYQLLIKPLTYNNFVLMVEHDLRFVNSEQDLINLSPYLQQT</sequence>
<keyword id="KW-0067">ATP-binding</keyword>
<keyword id="KW-1003">Cell membrane</keyword>
<keyword id="KW-0378">Hydrolase</keyword>
<keyword id="KW-0472">Membrane</keyword>
<keyword id="KW-0547">Nucleotide-binding</keyword>
<keyword id="KW-0645">Protease</keyword>
<keyword id="KW-1185">Reference proteome</keyword>
<keyword id="KW-0788">Thiol protease</keyword>
<keyword id="KW-0812">Transmembrane</keyword>
<keyword id="KW-1133">Transmembrane helix</keyword>
<keyword id="KW-0813">Transport</keyword>
<accession>P75207</accession>
<evidence type="ECO:0000255" key="1"/>
<evidence type="ECO:0000255" key="2">
    <source>
        <dbReference type="PROSITE-ProRule" id="PRU00362"/>
    </source>
</evidence>
<evidence type="ECO:0000255" key="3">
    <source>
        <dbReference type="PROSITE-ProRule" id="PRU00434"/>
    </source>
</evidence>
<evidence type="ECO:0000305" key="4"/>
<comment type="subcellular location">
    <subcellularLocation>
        <location evidence="4">Cell membrane</location>
        <topology evidence="4">Multi-pass membrane protein</topology>
    </subcellularLocation>
</comment>
<comment type="similarity">
    <text evidence="4">Belongs to the ABC transporter superfamily.</text>
</comment>
<gene>
    <name type="ordered locus">MPN_571</name>
    <name type="ORF">D02_orf660</name>
    <name type="ORF">MP271</name>
</gene>
<proteinExistence type="inferred from homology"/>
<organism>
    <name type="scientific">Mycoplasma pneumoniae (strain ATCC 29342 / M129 / Subtype 1)</name>
    <name type="common">Mycoplasmoides pneumoniae</name>
    <dbReference type="NCBI Taxonomy" id="272634"/>
    <lineage>
        <taxon>Bacteria</taxon>
        <taxon>Bacillati</taxon>
        <taxon>Mycoplasmatota</taxon>
        <taxon>Mycoplasmoidales</taxon>
        <taxon>Mycoplasmoidaceae</taxon>
        <taxon>Mycoplasmoides</taxon>
    </lineage>
</organism>
<feature type="chain" id="PRO_0000093248" description="Putative ABC transporter ATP-binding MG390 homolog">
    <location>
        <begin position="1"/>
        <end position="660"/>
    </location>
</feature>
<feature type="transmembrane region" description="Helical" evidence="1">
    <location>
        <begin position="150"/>
        <end position="170"/>
    </location>
</feature>
<feature type="transmembrane region" description="Helical" evidence="1">
    <location>
        <begin position="188"/>
        <end position="208"/>
    </location>
</feature>
<feature type="transmembrane region" description="Helical" evidence="1">
    <location>
        <begin position="265"/>
        <end position="285"/>
    </location>
</feature>
<feature type="transmembrane region" description="Helical" evidence="1">
    <location>
        <begin position="290"/>
        <end position="310"/>
    </location>
</feature>
<feature type="transmembrane region" description="Helical" evidence="1">
    <location>
        <begin position="379"/>
        <end position="399"/>
    </location>
</feature>
<feature type="transmembrane region" description="Helical" evidence="1">
    <location>
        <begin position="402"/>
        <end position="422"/>
    </location>
</feature>
<feature type="domain" description="Peptidase C39" evidence="2">
    <location>
        <begin position="6"/>
        <end position="126"/>
    </location>
</feature>
<feature type="domain" description="ABC transporter" evidence="2 3">
    <location>
        <begin position="464"/>
        <end position="660"/>
    </location>
</feature>
<feature type="active site" evidence="2">
    <location>
        <position position="12"/>
    </location>
</feature>
<feature type="binding site" evidence="2 3">
    <location>
        <begin position="494"/>
        <end position="501"/>
    </location>
    <ligand>
        <name>ATP</name>
        <dbReference type="ChEBI" id="CHEBI:30616"/>
    </ligand>
</feature>
<protein>
    <recommendedName>
        <fullName>Putative ABC transporter ATP-binding MG390 homolog</fullName>
    </recommendedName>
</protein>
<name>Y571_MYCPN</name>
<dbReference type="EMBL" id="U00089">
    <property type="protein sequence ID" value="AAB95919.1"/>
    <property type="molecule type" value="Genomic_DNA"/>
</dbReference>
<dbReference type="PIR" id="S73597">
    <property type="entry name" value="S73597"/>
</dbReference>
<dbReference type="RefSeq" id="NP_110260.1">
    <property type="nucleotide sequence ID" value="NC_000912.1"/>
</dbReference>
<dbReference type="RefSeq" id="WP_010874928.1">
    <property type="nucleotide sequence ID" value="NC_000912.1"/>
</dbReference>
<dbReference type="SMR" id="P75207"/>
<dbReference type="IntAct" id="P75207">
    <property type="interactions" value="3"/>
</dbReference>
<dbReference type="STRING" id="272634.MPN_571"/>
<dbReference type="EnsemblBacteria" id="AAB95919">
    <property type="protein sequence ID" value="AAB95919"/>
    <property type="gene ID" value="MPN_571"/>
</dbReference>
<dbReference type="KEGG" id="mpn:MPN_571"/>
<dbReference type="PATRIC" id="fig|272634.6.peg.633"/>
<dbReference type="HOGENOM" id="CLU_488191_0_0_14"/>
<dbReference type="OrthoDB" id="403954at2"/>
<dbReference type="BioCyc" id="MPNE272634:G1GJ3-936-MONOMER"/>
<dbReference type="Proteomes" id="UP000000808">
    <property type="component" value="Chromosome"/>
</dbReference>
<dbReference type="GO" id="GO:0043190">
    <property type="term" value="C:ATP-binding cassette (ABC) transporter complex"/>
    <property type="evidence" value="ECO:0007669"/>
    <property type="project" value="TreeGrafter"/>
</dbReference>
<dbReference type="GO" id="GO:0005524">
    <property type="term" value="F:ATP binding"/>
    <property type="evidence" value="ECO:0007669"/>
    <property type="project" value="UniProtKB-KW"/>
</dbReference>
<dbReference type="GO" id="GO:0016887">
    <property type="term" value="F:ATP hydrolysis activity"/>
    <property type="evidence" value="ECO:0007669"/>
    <property type="project" value="InterPro"/>
</dbReference>
<dbReference type="GO" id="GO:0042626">
    <property type="term" value="F:ATPase-coupled transmembrane transporter activity"/>
    <property type="evidence" value="ECO:0007669"/>
    <property type="project" value="TreeGrafter"/>
</dbReference>
<dbReference type="GO" id="GO:0008234">
    <property type="term" value="F:cysteine-type peptidase activity"/>
    <property type="evidence" value="ECO:0007669"/>
    <property type="project" value="UniProtKB-KW"/>
</dbReference>
<dbReference type="GO" id="GO:0006508">
    <property type="term" value="P:proteolysis"/>
    <property type="evidence" value="ECO:0007669"/>
    <property type="project" value="UniProtKB-KW"/>
</dbReference>
<dbReference type="CDD" id="cd02424">
    <property type="entry name" value="Peptidase_C39E"/>
    <property type="match status" value="1"/>
</dbReference>
<dbReference type="Gene3D" id="3.90.70.10">
    <property type="entry name" value="Cysteine proteinases"/>
    <property type="match status" value="1"/>
</dbReference>
<dbReference type="Gene3D" id="3.40.50.300">
    <property type="entry name" value="P-loop containing nucleotide triphosphate hydrolases"/>
    <property type="match status" value="1"/>
</dbReference>
<dbReference type="InterPro" id="IPR036640">
    <property type="entry name" value="ABC1_TM_sf"/>
</dbReference>
<dbReference type="InterPro" id="IPR003439">
    <property type="entry name" value="ABC_transporter-like_ATP-bd"/>
</dbReference>
<dbReference type="InterPro" id="IPR050095">
    <property type="entry name" value="ECF_ABC_transporter_ATP-bd"/>
</dbReference>
<dbReference type="InterPro" id="IPR027417">
    <property type="entry name" value="P-loop_NTPase"/>
</dbReference>
<dbReference type="InterPro" id="IPR005074">
    <property type="entry name" value="Peptidase_C39"/>
</dbReference>
<dbReference type="PANTHER" id="PTHR43553">
    <property type="entry name" value="HEAVY METAL TRANSPORTER"/>
    <property type="match status" value="1"/>
</dbReference>
<dbReference type="Pfam" id="PF00005">
    <property type="entry name" value="ABC_tran"/>
    <property type="match status" value="1"/>
</dbReference>
<dbReference type="Pfam" id="PF03412">
    <property type="entry name" value="Peptidase_C39"/>
    <property type="match status" value="1"/>
</dbReference>
<dbReference type="SUPFAM" id="SSF90123">
    <property type="entry name" value="ABC transporter transmembrane region"/>
    <property type="match status" value="1"/>
</dbReference>
<dbReference type="SUPFAM" id="SSF52540">
    <property type="entry name" value="P-loop containing nucleoside triphosphate hydrolases"/>
    <property type="match status" value="1"/>
</dbReference>
<dbReference type="PROSITE" id="PS50893">
    <property type="entry name" value="ABC_TRANSPORTER_2"/>
    <property type="match status" value="1"/>
</dbReference>
<dbReference type="PROSITE" id="PS50990">
    <property type="entry name" value="PEPTIDASE_C39"/>
    <property type="match status" value="1"/>
</dbReference>